<comment type="function">
    <text evidence="1">Cell wall formation.</text>
</comment>
<comment type="catalytic activity">
    <reaction evidence="1">
        <text>UDP-N-acetyl-alpha-D-muramate + L-alanine + ATP = UDP-N-acetyl-alpha-D-muramoyl-L-alanine + ADP + phosphate + H(+)</text>
        <dbReference type="Rhea" id="RHEA:23372"/>
        <dbReference type="ChEBI" id="CHEBI:15378"/>
        <dbReference type="ChEBI" id="CHEBI:30616"/>
        <dbReference type="ChEBI" id="CHEBI:43474"/>
        <dbReference type="ChEBI" id="CHEBI:57972"/>
        <dbReference type="ChEBI" id="CHEBI:70757"/>
        <dbReference type="ChEBI" id="CHEBI:83898"/>
        <dbReference type="ChEBI" id="CHEBI:456216"/>
        <dbReference type="EC" id="6.3.2.8"/>
    </reaction>
</comment>
<comment type="pathway">
    <text evidence="1">Cell wall biogenesis; peptidoglycan biosynthesis.</text>
</comment>
<comment type="subcellular location">
    <subcellularLocation>
        <location evidence="1">Cytoplasm</location>
    </subcellularLocation>
</comment>
<comment type="similarity">
    <text evidence="1">Belongs to the MurCDEF family.</text>
</comment>
<gene>
    <name evidence="1" type="primary">murC</name>
    <name type="ordered locus">P9303_00261</name>
</gene>
<organism>
    <name type="scientific">Prochlorococcus marinus (strain MIT 9303)</name>
    <dbReference type="NCBI Taxonomy" id="59922"/>
    <lineage>
        <taxon>Bacteria</taxon>
        <taxon>Bacillati</taxon>
        <taxon>Cyanobacteriota</taxon>
        <taxon>Cyanophyceae</taxon>
        <taxon>Synechococcales</taxon>
        <taxon>Prochlorococcaceae</taxon>
        <taxon>Prochlorococcus</taxon>
    </lineage>
</organism>
<accession>A2C5M3</accession>
<reference key="1">
    <citation type="journal article" date="2007" name="PLoS Genet.">
        <title>Patterns and implications of gene gain and loss in the evolution of Prochlorococcus.</title>
        <authorList>
            <person name="Kettler G.C."/>
            <person name="Martiny A.C."/>
            <person name="Huang K."/>
            <person name="Zucker J."/>
            <person name="Coleman M.L."/>
            <person name="Rodrigue S."/>
            <person name="Chen F."/>
            <person name="Lapidus A."/>
            <person name="Ferriera S."/>
            <person name="Johnson J."/>
            <person name="Steglich C."/>
            <person name="Church G.M."/>
            <person name="Richardson P."/>
            <person name="Chisholm S.W."/>
        </authorList>
    </citation>
    <scope>NUCLEOTIDE SEQUENCE [LARGE SCALE GENOMIC DNA]</scope>
    <source>
        <strain>MIT 9303</strain>
    </source>
</reference>
<keyword id="KW-0067">ATP-binding</keyword>
<keyword id="KW-0131">Cell cycle</keyword>
<keyword id="KW-0132">Cell division</keyword>
<keyword id="KW-0133">Cell shape</keyword>
<keyword id="KW-0961">Cell wall biogenesis/degradation</keyword>
<keyword id="KW-0963">Cytoplasm</keyword>
<keyword id="KW-0436">Ligase</keyword>
<keyword id="KW-0547">Nucleotide-binding</keyword>
<keyword id="KW-0573">Peptidoglycan synthesis</keyword>
<proteinExistence type="inferred from homology"/>
<protein>
    <recommendedName>
        <fullName evidence="1">UDP-N-acetylmuramate--L-alanine ligase</fullName>
        <ecNumber evidence="1">6.3.2.8</ecNumber>
    </recommendedName>
    <alternativeName>
        <fullName evidence="1">UDP-N-acetylmuramoyl-L-alanine synthetase</fullName>
    </alternativeName>
</protein>
<evidence type="ECO:0000255" key="1">
    <source>
        <dbReference type="HAMAP-Rule" id="MF_00046"/>
    </source>
</evidence>
<dbReference type="EC" id="6.3.2.8" evidence="1"/>
<dbReference type="EMBL" id="CP000554">
    <property type="protein sequence ID" value="ABM76783.1"/>
    <property type="molecule type" value="Genomic_DNA"/>
</dbReference>
<dbReference type="RefSeq" id="WP_011824716.1">
    <property type="nucleotide sequence ID" value="NC_008820.1"/>
</dbReference>
<dbReference type="SMR" id="A2C5M3"/>
<dbReference type="STRING" id="59922.P9303_00261"/>
<dbReference type="KEGG" id="pmf:P9303_00261"/>
<dbReference type="HOGENOM" id="CLU_028104_2_2_3"/>
<dbReference type="BioCyc" id="PMAR59922:G1G80-27-MONOMER"/>
<dbReference type="UniPathway" id="UPA00219"/>
<dbReference type="Proteomes" id="UP000002274">
    <property type="component" value="Chromosome"/>
</dbReference>
<dbReference type="GO" id="GO:0005737">
    <property type="term" value="C:cytoplasm"/>
    <property type="evidence" value="ECO:0007669"/>
    <property type="project" value="UniProtKB-SubCell"/>
</dbReference>
<dbReference type="GO" id="GO:0005524">
    <property type="term" value="F:ATP binding"/>
    <property type="evidence" value="ECO:0007669"/>
    <property type="project" value="UniProtKB-UniRule"/>
</dbReference>
<dbReference type="GO" id="GO:0008763">
    <property type="term" value="F:UDP-N-acetylmuramate-L-alanine ligase activity"/>
    <property type="evidence" value="ECO:0007669"/>
    <property type="project" value="UniProtKB-UniRule"/>
</dbReference>
<dbReference type="GO" id="GO:0051301">
    <property type="term" value="P:cell division"/>
    <property type="evidence" value="ECO:0007669"/>
    <property type="project" value="UniProtKB-KW"/>
</dbReference>
<dbReference type="GO" id="GO:0071555">
    <property type="term" value="P:cell wall organization"/>
    <property type="evidence" value="ECO:0007669"/>
    <property type="project" value="UniProtKB-KW"/>
</dbReference>
<dbReference type="GO" id="GO:0009252">
    <property type="term" value="P:peptidoglycan biosynthetic process"/>
    <property type="evidence" value="ECO:0007669"/>
    <property type="project" value="UniProtKB-UniRule"/>
</dbReference>
<dbReference type="GO" id="GO:0008360">
    <property type="term" value="P:regulation of cell shape"/>
    <property type="evidence" value="ECO:0007669"/>
    <property type="project" value="UniProtKB-KW"/>
</dbReference>
<dbReference type="Gene3D" id="3.90.190.20">
    <property type="entry name" value="Mur ligase, C-terminal domain"/>
    <property type="match status" value="1"/>
</dbReference>
<dbReference type="Gene3D" id="3.40.1190.10">
    <property type="entry name" value="Mur-like, catalytic domain"/>
    <property type="match status" value="1"/>
</dbReference>
<dbReference type="Gene3D" id="3.40.50.720">
    <property type="entry name" value="NAD(P)-binding Rossmann-like Domain"/>
    <property type="match status" value="1"/>
</dbReference>
<dbReference type="HAMAP" id="MF_00046">
    <property type="entry name" value="MurC"/>
    <property type="match status" value="1"/>
</dbReference>
<dbReference type="InterPro" id="IPR036565">
    <property type="entry name" value="Mur-like_cat_sf"/>
</dbReference>
<dbReference type="InterPro" id="IPR004101">
    <property type="entry name" value="Mur_ligase_C"/>
</dbReference>
<dbReference type="InterPro" id="IPR036615">
    <property type="entry name" value="Mur_ligase_C_dom_sf"/>
</dbReference>
<dbReference type="InterPro" id="IPR013221">
    <property type="entry name" value="Mur_ligase_cen"/>
</dbReference>
<dbReference type="InterPro" id="IPR000713">
    <property type="entry name" value="Mur_ligase_N"/>
</dbReference>
<dbReference type="InterPro" id="IPR050061">
    <property type="entry name" value="MurCDEF_pg_biosynth"/>
</dbReference>
<dbReference type="InterPro" id="IPR005758">
    <property type="entry name" value="UDP-N-AcMur_Ala_ligase_MurC"/>
</dbReference>
<dbReference type="NCBIfam" id="TIGR01082">
    <property type="entry name" value="murC"/>
    <property type="match status" value="1"/>
</dbReference>
<dbReference type="PANTHER" id="PTHR43445:SF3">
    <property type="entry name" value="UDP-N-ACETYLMURAMATE--L-ALANINE LIGASE"/>
    <property type="match status" value="1"/>
</dbReference>
<dbReference type="PANTHER" id="PTHR43445">
    <property type="entry name" value="UDP-N-ACETYLMURAMATE--L-ALANINE LIGASE-RELATED"/>
    <property type="match status" value="1"/>
</dbReference>
<dbReference type="Pfam" id="PF01225">
    <property type="entry name" value="Mur_ligase"/>
    <property type="match status" value="1"/>
</dbReference>
<dbReference type="Pfam" id="PF02875">
    <property type="entry name" value="Mur_ligase_C"/>
    <property type="match status" value="1"/>
</dbReference>
<dbReference type="Pfam" id="PF08245">
    <property type="entry name" value="Mur_ligase_M"/>
    <property type="match status" value="1"/>
</dbReference>
<dbReference type="SUPFAM" id="SSF51984">
    <property type="entry name" value="MurCD N-terminal domain"/>
    <property type="match status" value="1"/>
</dbReference>
<dbReference type="SUPFAM" id="SSF53623">
    <property type="entry name" value="MurD-like peptide ligases, catalytic domain"/>
    <property type="match status" value="1"/>
</dbReference>
<dbReference type="SUPFAM" id="SSF53244">
    <property type="entry name" value="MurD-like peptide ligases, peptide-binding domain"/>
    <property type="match status" value="1"/>
</dbReference>
<feature type="chain" id="PRO_1000004387" description="UDP-N-acetylmuramate--L-alanine ligase">
    <location>
        <begin position="1"/>
        <end position="488"/>
    </location>
</feature>
<feature type="binding site" evidence="1">
    <location>
        <begin position="129"/>
        <end position="135"/>
    </location>
    <ligand>
        <name>ATP</name>
        <dbReference type="ChEBI" id="CHEBI:30616"/>
    </ligand>
</feature>
<sequence length="488" mass="52706">MSLWFCPLTSTLSRQQPIHFIGVGGIGMSALALILVNRGHIVSGSDPRENTTVERLRAQGVRVFRDQSAANINAICSNVDLLPLVVISTAIPKSNPELKAAKLSQLKILHRSDLLAALIQAQPSIAVAGSHGKTTTSTLLTTLLATTDQDPTAVIGGVVPYYDSNGHAGKGRLLVAEADESDGSLVKFQATLGVITNLELDHTDHYADLDELINTMKRFGRGCRRLLANFDCPILKEHFDATAWWSVKTSAGVDFAALPICLNGDQTIADIYEQGKRMGQITLPMPGLHNLSNAMAAIAACRLAGLSFEDLQQGLADLQPPGRRFDFRGTWEGRQIVDDYAHHPSEVSATLAMARLIVTSGRSQLPSPPKRILAVFQPHRYSRTNEFLYEFARALGEADAVLLAPVYSAGENPIQGATSESLANAIRIQHPNLPVAVAENFNQLTLLVQKHSLKGDLVLAMGAGNINNLWRQLTRLDNAKTCPPSLAA</sequence>
<name>MURC_PROM3</name>